<proteinExistence type="inferred from homology"/>
<keyword id="KW-1185">Reference proteome</keyword>
<keyword id="KW-0687">Ribonucleoprotein</keyword>
<keyword id="KW-0689">Ribosomal protein</keyword>
<keyword id="KW-0694">RNA-binding</keyword>
<keyword id="KW-0699">rRNA-binding</keyword>
<keyword id="KW-0820">tRNA-binding</keyword>
<reference key="1">
    <citation type="journal article" date="2003" name="Proc. Natl. Acad. Sci. U.S.A.">
        <title>Genome sequence of the cyanobacterium Prochlorococcus marinus SS120, a nearly minimal oxyphototrophic genome.</title>
        <authorList>
            <person name="Dufresne A."/>
            <person name="Salanoubat M."/>
            <person name="Partensky F."/>
            <person name="Artiguenave F."/>
            <person name="Axmann I.M."/>
            <person name="Barbe V."/>
            <person name="Duprat S."/>
            <person name="Galperin M.Y."/>
            <person name="Koonin E.V."/>
            <person name="Le Gall F."/>
            <person name="Makarova K.S."/>
            <person name="Ostrowski M."/>
            <person name="Oztas S."/>
            <person name="Robert C."/>
            <person name="Rogozin I.B."/>
            <person name="Scanlan D.J."/>
            <person name="Tandeau de Marsac N."/>
            <person name="Weissenbach J."/>
            <person name="Wincker P."/>
            <person name="Wolf Y.I."/>
            <person name="Hess W.R."/>
        </authorList>
    </citation>
    <scope>NUCLEOTIDE SEQUENCE [LARGE SCALE GENOMIC DNA]</scope>
    <source>
        <strain>SARG / CCMP1375 / SS120</strain>
    </source>
</reference>
<dbReference type="EMBL" id="AE017126">
    <property type="protein sequence ID" value="AAQ00744.1"/>
    <property type="molecule type" value="Genomic_DNA"/>
</dbReference>
<dbReference type="RefSeq" id="NP_876091.1">
    <property type="nucleotide sequence ID" value="NC_005042.1"/>
</dbReference>
<dbReference type="RefSeq" id="WP_011125849.1">
    <property type="nucleotide sequence ID" value="NC_005042.1"/>
</dbReference>
<dbReference type="SMR" id="Q7V9X4"/>
<dbReference type="STRING" id="167539.Pro_1700"/>
<dbReference type="EnsemblBacteria" id="AAQ00744">
    <property type="protein sequence ID" value="AAQ00744"/>
    <property type="gene ID" value="Pro_1700"/>
</dbReference>
<dbReference type="KEGG" id="pma:Pro_1700"/>
<dbReference type="PATRIC" id="fig|167539.5.peg.1795"/>
<dbReference type="eggNOG" id="COG0094">
    <property type="taxonomic scope" value="Bacteria"/>
</dbReference>
<dbReference type="HOGENOM" id="CLU_061015_2_1_3"/>
<dbReference type="OrthoDB" id="9806626at2"/>
<dbReference type="Proteomes" id="UP000001420">
    <property type="component" value="Chromosome"/>
</dbReference>
<dbReference type="GO" id="GO:1990904">
    <property type="term" value="C:ribonucleoprotein complex"/>
    <property type="evidence" value="ECO:0007669"/>
    <property type="project" value="UniProtKB-KW"/>
</dbReference>
<dbReference type="GO" id="GO:0005840">
    <property type="term" value="C:ribosome"/>
    <property type="evidence" value="ECO:0007669"/>
    <property type="project" value="UniProtKB-KW"/>
</dbReference>
<dbReference type="GO" id="GO:0019843">
    <property type="term" value="F:rRNA binding"/>
    <property type="evidence" value="ECO:0007669"/>
    <property type="project" value="UniProtKB-UniRule"/>
</dbReference>
<dbReference type="GO" id="GO:0003735">
    <property type="term" value="F:structural constituent of ribosome"/>
    <property type="evidence" value="ECO:0007669"/>
    <property type="project" value="InterPro"/>
</dbReference>
<dbReference type="GO" id="GO:0000049">
    <property type="term" value="F:tRNA binding"/>
    <property type="evidence" value="ECO:0007669"/>
    <property type="project" value="UniProtKB-UniRule"/>
</dbReference>
<dbReference type="GO" id="GO:0006412">
    <property type="term" value="P:translation"/>
    <property type="evidence" value="ECO:0007669"/>
    <property type="project" value="UniProtKB-UniRule"/>
</dbReference>
<dbReference type="FunFam" id="3.30.1440.10:FF:000001">
    <property type="entry name" value="50S ribosomal protein L5"/>
    <property type="match status" value="1"/>
</dbReference>
<dbReference type="Gene3D" id="3.30.1440.10">
    <property type="match status" value="1"/>
</dbReference>
<dbReference type="HAMAP" id="MF_01333_B">
    <property type="entry name" value="Ribosomal_uL5_B"/>
    <property type="match status" value="1"/>
</dbReference>
<dbReference type="InterPro" id="IPR002132">
    <property type="entry name" value="Ribosomal_uL5"/>
</dbReference>
<dbReference type="InterPro" id="IPR020930">
    <property type="entry name" value="Ribosomal_uL5_bac-type"/>
</dbReference>
<dbReference type="InterPro" id="IPR031309">
    <property type="entry name" value="Ribosomal_uL5_C"/>
</dbReference>
<dbReference type="InterPro" id="IPR020929">
    <property type="entry name" value="Ribosomal_uL5_CS"/>
</dbReference>
<dbReference type="InterPro" id="IPR022803">
    <property type="entry name" value="Ribosomal_uL5_dom_sf"/>
</dbReference>
<dbReference type="InterPro" id="IPR031310">
    <property type="entry name" value="Ribosomal_uL5_N"/>
</dbReference>
<dbReference type="NCBIfam" id="NF000585">
    <property type="entry name" value="PRK00010.1"/>
    <property type="match status" value="1"/>
</dbReference>
<dbReference type="PANTHER" id="PTHR11994">
    <property type="entry name" value="60S RIBOSOMAL PROTEIN L11-RELATED"/>
    <property type="match status" value="1"/>
</dbReference>
<dbReference type="Pfam" id="PF00281">
    <property type="entry name" value="Ribosomal_L5"/>
    <property type="match status" value="1"/>
</dbReference>
<dbReference type="Pfam" id="PF00673">
    <property type="entry name" value="Ribosomal_L5_C"/>
    <property type="match status" value="1"/>
</dbReference>
<dbReference type="PIRSF" id="PIRSF002161">
    <property type="entry name" value="Ribosomal_L5"/>
    <property type="match status" value="1"/>
</dbReference>
<dbReference type="SUPFAM" id="SSF55282">
    <property type="entry name" value="RL5-like"/>
    <property type="match status" value="1"/>
</dbReference>
<dbReference type="PROSITE" id="PS00358">
    <property type="entry name" value="RIBOSOMAL_L5"/>
    <property type="match status" value="1"/>
</dbReference>
<comment type="function">
    <text evidence="1">This is one of the proteins that bind and probably mediate the attachment of the 5S RNA into the large ribosomal subunit, where it forms part of the central protuberance. In the 70S ribosome it contacts protein S13 of the 30S subunit (bridge B1b), connecting the 2 subunits; this bridge is implicated in subunit movement. Contacts the P site tRNA; the 5S rRNA and some of its associated proteins might help stabilize positioning of ribosome-bound tRNAs.</text>
</comment>
<comment type="subunit">
    <text evidence="1">Part of the 50S ribosomal subunit; part of the 5S rRNA/L5/L18/L25 subcomplex. Contacts the 5S rRNA and the P site tRNA. Forms a bridge to the 30S subunit in the 70S ribosome.</text>
</comment>
<comment type="similarity">
    <text evidence="1">Belongs to the universal ribosomal protein uL5 family.</text>
</comment>
<organism>
    <name type="scientific">Prochlorococcus marinus (strain SARG / CCMP1375 / SS120)</name>
    <dbReference type="NCBI Taxonomy" id="167539"/>
    <lineage>
        <taxon>Bacteria</taxon>
        <taxon>Bacillati</taxon>
        <taxon>Cyanobacteriota</taxon>
        <taxon>Cyanophyceae</taxon>
        <taxon>Synechococcales</taxon>
        <taxon>Prochlorococcaceae</taxon>
        <taxon>Prochlorococcus</taxon>
    </lineage>
</organism>
<evidence type="ECO:0000255" key="1">
    <source>
        <dbReference type="HAMAP-Rule" id="MF_01333"/>
    </source>
</evidence>
<evidence type="ECO:0000305" key="2"/>
<gene>
    <name evidence="1" type="primary">rplE</name>
    <name evidence="1" type="synonym">rpl5</name>
    <name type="ordered locus">Pro_1700</name>
</gene>
<sequence>MSLKNRYRETIRPKLLKDLGFSNLHQVPKVVKINVNRGLGEAAQNSKALEASLSEVSTITGQKALVTRAKKAIAGFKIRQGMPIGCAVTLRGERMYAFLERLINLALPRIRDFRGVSPKSFDGRGNFTLGVKEQLIFPEISFDKIDAIRGMDITIVTSARTDEEGRALLKEMGMPFRSN</sequence>
<name>RL5_PROMA</name>
<feature type="chain" id="PRO_0000124966" description="Large ribosomal subunit protein uL5">
    <location>
        <begin position="1"/>
        <end position="179"/>
    </location>
</feature>
<protein>
    <recommendedName>
        <fullName evidence="1">Large ribosomal subunit protein uL5</fullName>
    </recommendedName>
    <alternativeName>
        <fullName evidence="2">50S ribosomal protein L5</fullName>
    </alternativeName>
</protein>
<accession>Q7V9X4</accession>